<keyword id="KW-0007">Acetylation</keyword>
<keyword id="KW-0158">Chromosome</keyword>
<keyword id="KW-0238">DNA-binding</keyword>
<keyword id="KW-0544">Nucleosome core</keyword>
<keyword id="KW-0539">Nucleus</keyword>
<keyword id="KW-1185">Reference proteome</keyword>
<comment type="function">
    <text evidence="1">Variant histone H2A which can replace H2A in some nucleosomes. Nucleosomes wrap and compact DNA into chromatin, limiting DNA accessibility to the cellular machineries which require DNA as a template. Histones thereby play a central role in transcription regulation, DNA repair, DNA replication and chromosomal stability. DNA accessibility is regulated via a complex set of post-translational modifications of histones, also called histone code, and nucleosome remodeling. This variant is enriched at promoters, it may keep them in a repressed state until the appropriate activation signal is received. Near telomeres, it may counteract gene silencing caused by the spread of heterochromatin proteins. Required for the RNA polymerase II and SPT15/TBP recruitment to the target genes. Involved in chromosome stability (By similarity).</text>
</comment>
<comment type="subunit">
    <text evidence="1">The nucleosome is a histone octamer containing two molecules each of H2A, H2B, H3 and H4 assembled in one H3-H4 heterotetramer and two H2A-H2B heterodimers. The octamer wraps approximately 147 bp of DNA. H2A or its variant H2A.Z forms a heterodimer with H2B. H2A.Z associates with the VPS72/SWC2 subunit of the SWR1 chromatin remodeling complex. Also interacts with RBP1/DNA-directed RNA polymerase II largest subunit (By similarity).</text>
</comment>
<comment type="subcellular location">
    <subcellularLocation>
        <location evidence="1">Nucleus</location>
    </subcellularLocation>
    <subcellularLocation>
        <location evidence="1">Chromosome</location>
    </subcellularLocation>
</comment>
<comment type="PTM">
    <text evidence="1">Acetylated once deposited into chromatin.</text>
</comment>
<comment type="similarity">
    <text evidence="3">Belongs to the histone H2A family.</text>
</comment>
<name>H2AZ_LODEL</name>
<accession>A5DXC6</accession>
<dbReference type="EMBL" id="CH981525">
    <property type="protein sequence ID" value="EDK43834.1"/>
    <property type="molecule type" value="Genomic_DNA"/>
</dbReference>
<dbReference type="RefSeq" id="XP_001527184.1">
    <property type="nucleotide sequence ID" value="XM_001527134.1"/>
</dbReference>
<dbReference type="SMR" id="A5DXC6"/>
<dbReference type="FunCoup" id="A5DXC6">
    <property type="interactions" value="1058"/>
</dbReference>
<dbReference type="STRING" id="379508.A5DXC6"/>
<dbReference type="GeneID" id="5234028"/>
<dbReference type="KEGG" id="lel:PVL30_001986"/>
<dbReference type="VEuPathDB" id="FungiDB:LELG_02013"/>
<dbReference type="eggNOG" id="KOG1757">
    <property type="taxonomic scope" value="Eukaryota"/>
</dbReference>
<dbReference type="HOGENOM" id="CLU_062828_2_1_1"/>
<dbReference type="InParanoid" id="A5DXC6"/>
<dbReference type="OMA" id="MNKKGAP"/>
<dbReference type="OrthoDB" id="9421954at2759"/>
<dbReference type="Proteomes" id="UP000001996">
    <property type="component" value="Unassembled WGS sequence"/>
</dbReference>
<dbReference type="GO" id="GO:0000791">
    <property type="term" value="C:euchromatin"/>
    <property type="evidence" value="ECO:0007669"/>
    <property type="project" value="EnsemblFungi"/>
</dbReference>
<dbReference type="GO" id="GO:0000786">
    <property type="term" value="C:nucleosome"/>
    <property type="evidence" value="ECO:0007669"/>
    <property type="project" value="UniProtKB-KW"/>
</dbReference>
<dbReference type="GO" id="GO:0005634">
    <property type="term" value="C:nucleus"/>
    <property type="evidence" value="ECO:0007669"/>
    <property type="project" value="UniProtKB-SubCell"/>
</dbReference>
<dbReference type="GO" id="GO:0031490">
    <property type="term" value="F:chromatin DNA binding"/>
    <property type="evidence" value="ECO:0007669"/>
    <property type="project" value="EnsemblFungi"/>
</dbReference>
<dbReference type="GO" id="GO:0042802">
    <property type="term" value="F:identical protein binding"/>
    <property type="evidence" value="ECO:0007669"/>
    <property type="project" value="EnsemblFungi"/>
</dbReference>
<dbReference type="GO" id="GO:0046982">
    <property type="term" value="F:protein heterodimerization activity"/>
    <property type="evidence" value="ECO:0007669"/>
    <property type="project" value="InterPro"/>
</dbReference>
<dbReference type="GO" id="GO:0000978">
    <property type="term" value="F:RNA polymerase II cis-regulatory region sequence-specific DNA binding"/>
    <property type="evidence" value="ECO:0007669"/>
    <property type="project" value="EnsemblFungi"/>
</dbReference>
<dbReference type="GO" id="GO:0030527">
    <property type="term" value="F:structural constituent of chromatin"/>
    <property type="evidence" value="ECO:0007669"/>
    <property type="project" value="InterPro"/>
</dbReference>
<dbReference type="GO" id="GO:0140898">
    <property type="term" value="P:CENP-A eviction from euchromatin"/>
    <property type="evidence" value="ECO:0007669"/>
    <property type="project" value="EnsemblFungi"/>
</dbReference>
<dbReference type="GO" id="GO:0070481">
    <property type="term" value="P:nuclear-transcribed mRNA catabolic process, non-stop decay"/>
    <property type="evidence" value="ECO:0007669"/>
    <property type="project" value="EnsemblFungi"/>
</dbReference>
<dbReference type="GO" id="GO:0006357">
    <property type="term" value="P:regulation of transcription by RNA polymerase II"/>
    <property type="evidence" value="ECO:0007669"/>
    <property type="project" value="EnsemblFungi"/>
</dbReference>
<dbReference type="GO" id="GO:0030466">
    <property type="term" value="P:silent mating-type cassette heterochromatin formation"/>
    <property type="evidence" value="ECO:0007669"/>
    <property type="project" value="EnsemblFungi"/>
</dbReference>
<dbReference type="GO" id="GO:0006368">
    <property type="term" value="P:transcription elongation by RNA polymerase II"/>
    <property type="evidence" value="ECO:0007669"/>
    <property type="project" value="EnsemblFungi"/>
</dbReference>
<dbReference type="CDD" id="cd00074">
    <property type="entry name" value="HFD_H2A"/>
    <property type="match status" value="1"/>
</dbReference>
<dbReference type="FunFam" id="1.10.20.10:FF:000021">
    <property type="entry name" value="Histone H2A"/>
    <property type="match status" value="1"/>
</dbReference>
<dbReference type="Gene3D" id="1.10.20.10">
    <property type="entry name" value="Histone, subunit A"/>
    <property type="match status" value="1"/>
</dbReference>
<dbReference type="InterPro" id="IPR009072">
    <property type="entry name" value="Histone-fold"/>
</dbReference>
<dbReference type="InterPro" id="IPR002119">
    <property type="entry name" value="Histone_H2A"/>
</dbReference>
<dbReference type="InterPro" id="IPR007125">
    <property type="entry name" value="Histone_H2A/H2B/H3"/>
</dbReference>
<dbReference type="InterPro" id="IPR032454">
    <property type="entry name" value="Histone_H2A_C"/>
</dbReference>
<dbReference type="InterPro" id="IPR032458">
    <property type="entry name" value="Histone_H2A_CS"/>
</dbReference>
<dbReference type="PANTHER" id="PTHR23430">
    <property type="entry name" value="HISTONE H2A"/>
    <property type="match status" value="1"/>
</dbReference>
<dbReference type="Pfam" id="PF00125">
    <property type="entry name" value="Histone"/>
    <property type="match status" value="1"/>
</dbReference>
<dbReference type="Pfam" id="PF16211">
    <property type="entry name" value="Histone_H2A_C"/>
    <property type="match status" value="1"/>
</dbReference>
<dbReference type="PRINTS" id="PR00620">
    <property type="entry name" value="HISTONEH2A"/>
</dbReference>
<dbReference type="SMART" id="SM00414">
    <property type="entry name" value="H2A"/>
    <property type="match status" value="1"/>
</dbReference>
<dbReference type="SUPFAM" id="SSF47113">
    <property type="entry name" value="Histone-fold"/>
    <property type="match status" value="1"/>
</dbReference>
<dbReference type="PROSITE" id="PS00046">
    <property type="entry name" value="HISTONE_H2A"/>
    <property type="match status" value="1"/>
</dbReference>
<evidence type="ECO:0000250" key="1"/>
<evidence type="ECO:0000256" key="2">
    <source>
        <dbReference type="SAM" id="MobiDB-lite"/>
    </source>
</evidence>
<evidence type="ECO:0000305" key="3"/>
<reference key="1">
    <citation type="journal article" date="2009" name="Nature">
        <title>Evolution of pathogenicity and sexual reproduction in eight Candida genomes.</title>
        <authorList>
            <person name="Butler G."/>
            <person name="Rasmussen M.D."/>
            <person name="Lin M.F."/>
            <person name="Santos M.A.S."/>
            <person name="Sakthikumar S."/>
            <person name="Munro C.A."/>
            <person name="Rheinbay E."/>
            <person name="Grabherr M."/>
            <person name="Forche A."/>
            <person name="Reedy J.L."/>
            <person name="Agrafioti I."/>
            <person name="Arnaud M.B."/>
            <person name="Bates S."/>
            <person name="Brown A.J.P."/>
            <person name="Brunke S."/>
            <person name="Costanzo M.C."/>
            <person name="Fitzpatrick D.A."/>
            <person name="de Groot P.W.J."/>
            <person name="Harris D."/>
            <person name="Hoyer L.L."/>
            <person name="Hube B."/>
            <person name="Klis F.M."/>
            <person name="Kodira C."/>
            <person name="Lennard N."/>
            <person name="Logue M.E."/>
            <person name="Martin R."/>
            <person name="Neiman A.M."/>
            <person name="Nikolaou E."/>
            <person name="Quail M.A."/>
            <person name="Quinn J."/>
            <person name="Santos M.C."/>
            <person name="Schmitzberger F.F."/>
            <person name="Sherlock G."/>
            <person name="Shah P."/>
            <person name="Silverstein K.A.T."/>
            <person name="Skrzypek M.S."/>
            <person name="Soll D."/>
            <person name="Staggs R."/>
            <person name="Stansfield I."/>
            <person name="Stumpf M.P.H."/>
            <person name="Sudbery P.E."/>
            <person name="Srikantha T."/>
            <person name="Zeng Q."/>
            <person name="Berman J."/>
            <person name="Berriman M."/>
            <person name="Heitman J."/>
            <person name="Gow N.A.R."/>
            <person name="Lorenz M.C."/>
            <person name="Birren B.W."/>
            <person name="Kellis M."/>
            <person name="Cuomo C.A."/>
        </authorList>
    </citation>
    <scope>NUCLEOTIDE SEQUENCE [LARGE SCALE GENOMIC DNA]</scope>
    <source>
        <strain>ATCC 11503 / BCRC 21390 / CBS 2605 / JCM 1781 / NBRC 1676 / NRRL YB-4239</strain>
    </source>
</reference>
<gene>
    <name type="primary">HTZ1</name>
    <name type="ORF">LELG_02013</name>
</gene>
<organism>
    <name type="scientific">Lodderomyces elongisporus (strain ATCC 11503 / CBS 2605 / JCM 1781 / NBRC 1676 / NRRL YB-4239)</name>
    <name type="common">Yeast</name>
    <name type="synonym">Saccharomyces elongisporus</name>
    <dbReference type="NCBI Taxonomy" id="379508"/>
    <lineage>
        <taxon>Eukaryota</taxon>
        <taxon>Fungi</taxon>
        <taxon>Dikarya</taxon>
        <taxon>Ascomycota</taxon>
        <taxon>Saccharomycotina</taxon>
        <taxon>Pichiomycetes</taxon>
        <taxon>Debaryomycetaceae</taxon>
        <taxon>Candida/Lodderomyces clade</taxon>
        <taxon>Lodderomyces</taxon>
    </lineage>
</organism>
<protein>
    <recommendedName>
        <fullName>Histone H2A.Z</fullName>
    </recommendedName>
</protein>
<proteinExistence type="inferred from homology"/>
<sequence length="133" mass="14449">MSGKGKVHGGKGKSSEIAKSSTSHSARAGLQFPVGRVKRYLKKQAQNKIRVGSKAAIYLTAVLEYLTAEVLELAGNAAKDLKVKRITPRHLQLAIRGDEELDNLIKATIAYGGVLPHINKALLLKVEKKKSHK</sequence>
<feature type="initiator methionine" description="Removed" evidence="1">
    <location>
        <position position="1"/>
    </location>
</feature>
<feature type="chain" id="PRO_0000297723" description="Histone H2A.Z">
    <location>
        <begin position="2"/>
        <end position="133"/>
    </location>
</feature>
<feature type="region of interest" description="Disordered" evidence="2">
    <location>
        <begin position="1"/>
        <end position="30"/>
    </location>
</feature>
<feature type="compositionally biased region" description="Basic residues" evidence="2">
    <location>
        <begin position="1"/>
        <end position="11"/>
    </location>
</feature>
<feature type="modified residue" description="N-acetylserine" evidence="1">
    <location>
        <position position="2"/>
    </location>
</feature>
<feature type="modified residue" description="N6-acetyllysine" evidence="1">
    <location>
        <position position="4"/>
    </location>
</feature>
<feature type="modified residue" description="N6-acetyllysine" evidence="1">
    <location>
        <position position="11"/>
    </location>
</feature>
<feature type="modified residue" description="N6-acetyllysine" evidence="1">
    <location>
        <position position="13"/>
    </location>
</feature>